<evidence type="ECO:0000255" key="1">
    <source>
        <dbReference type="HAMAP-Rule" id="MF_00254"/>
    </source>
</evidence>
<gene>
    <name evidence="1" type="primary">glyQ</name>
    <name type="ordered locus">RrIowa_1542</name>
</gene>
<proteinExistence type="inferred from homology"/>
<feature type="chain" id="PRO_1000078533" description="Glycine--tRNA ligase alpha subunit">
    <location>
        <begin position="1"/>
        <end position="288"/>
    </location>
</feature>
<accession>B0BVK1</accession>
<name>SYGA_RICRO</name>
<organism>
    <name type="scientific">Rickettsia rickettsii (strain Iowa)</name>
    <dbReference type="NCBI Taxonomy" id="452659"/>
    <lineage>
        <taxon>Bacteria</taxon>
        <taxon>Pseudomonadati</taxon>
        <taxon>Pseudomonadota</taxon>
        <taxon>Alphaproteobacteria</taxon>
        <taxon>Rickettsiales</taxon>
        <taxon>Rickettsiaceae</taxon>
        <taxon>Rickettsieae</taxon>
        <taxon>Rickettsia</taxon>
        <taxon>spotted fever group</taxon>
    </lineage>
</organism>
<protein>
    <recommendedName>
        <fullName evidence="1">Glycine--tRNA ligase alpha subunit</fullName>
        <ecNumber evidence="1">6.1.1.14</ecNumber>
    </recommendedName>
    <alternativeName>
        <fullName evidence="1">Glycyl-tRNA synthetase alpha subunit</fullName>
        <shortName evidence="1">GlyRS</shortName>
    </alternativeName>
</protein>
<comment type="catalytic activity">
    <reaction evidence="1">
        <text>tRNA(Gly) + glycine + ATP = glycyl-tRNA(Gly) + AMP + diphosphate</text>
        <dbReference type="Rhea" id="RHEA:16013"/>
        <dbReference type="Rhea" id="RHEA-COMP:9664"/>
        <dbReference type="Rhea" id="RHEA-COMP:9683"/>
        <dbReference type="ChEBI" id="CHEBI:30616"/>
        <dbReference type="ChEBI" id="CHEBI:33019"/>
        <dbReference type="ChEBI" id="CHEBI:57305"/>
        <dbReference type="ChEBI" id="CHEBI:78442"/>
        <dbReference type="ChEBI" id="CHEBI:78522"/>
        <dbReference type="ChEBI" id="CHEBI:456215"/>
        <dbReference type="EC" id="6.1.1.14"/>
    </reaction>
</comment>
<comment type="subunit">
    <text evidence="1">Tetramer of two alpha and two beta subunits.</text>
</comment>
<comment type="subcellular location">
    <subcellularLocation>
        <location evidence="1">Cytoplasm</location>
    </subcellularLocation>
</comment>
<comment type="similarity">
    <text evidence="1">Belongs to the class-II aminoacyl-tRNA synthetase family.</text>
</comment>
<dbReference type="EC" id="6.1.1.14" evidence="1"/>
<dbReference type="EMBL" id="CP000766">
    <property type="protein sequence ID" value="ABY73261.1"/>
    <property type="molecule type" value="Genomic_DNA"/>
</dbReference>
<dbReference type="RefSeq" id="WP_012151423.1">
    <property type="nucleotide sequence ID" value="NC_010263.3"/>
</dbReference>
<dbReference type="SMR" id="B0BVK1"/>
<dbReference type="KEGG" id="rrj:RrIowa_1542"/>
<dbReference type="eggNOG" id="COG0752">
    <property type="taxonomic scope" value="Bacteria"/>
</dbReference>
<dbReference type="HOGENOM" id="CLU_057066_1_0_5"/>
<dbReference type="Proteomes" id="UP000000796">
    <property type="component" value="Chromosome"/>
</dbReference>
<dbReference type="GO" id="GO:0005829">
    <property type="term" value="C:cytosol"/>
    <property type="evidence" value="ECO:0007669"/>
    <property type="project" value="TreeGrafter"/>
</dbReference>
<dbReference type="GO" id="GO:0005524">
    <property type="term" value="F:ATP binding"/>
    <property type="evidence" value="ECO:0007669"/>
    <property type="project" value="UniProtKB-UniRule"/>
</dbReference>
<dbReference type="GO" id="GO:0004820">
    <property type="term" value="F:glycine-tRNA ligase activity"/>
    <property type="evidence" value="ECO:0007669"/>
    <property type="project" value="UniProtKB-UniRule"/>
</dbReference>
<dbReference type="GO" id="GO:0006426">
    <property type="term" value="P:glycyl-tRNA aminoacylation"/>
    <property type="evidence" value="ECO:0007669"/>
    <property type="project" value="UniProtKB-UniRule"/>
</dbReference>
<dbReference type="FunFam" id="3.30.930.10:FF:000006">
    <property type="entry name" value="Glycine--tRNA ligase alpha subunit"/>
    <property type="match status" value="1"/>
</dbReference>
<dbReference type="Gene3D" id="3.30.930.10">
    <property type="entry name" value="Bira Bifunctional Protein, Domain 2"/>
    <property type="match status" value="1"/>
</dbReference>
<dbReference type="Gene3D" id="1.20.58.180">
    <property type="entry name" value="Class II aaRS and biotin synthetases, domain 2"/>
    <property type="match status" value="1"/>
</dbReference>
<dbReference type="HAMAP" id="MF_00254">
    <property type="entry name" value="Gly_tRNA_synth_alpha"/>
    <property type="match status" value="1"/>
</dbReference>
<dbReference type="InterPro" id="IPR045864">
    <property type="entry name" value="aa-tRNA-synth_II/BPL/LPL"/>
</dbReference>
<dbReference type="InterPro" id="IPR006194">
    <property type="entry name" value="Gly-tRNA-synth_heterodimer"/>
</dbReference>
<dbReference type="InterPro" id="IPR002310">
    <property type="entry name" value="Gly-tRNA_ligase_asu"/>
</dbReference>
<dbReference type="NCBIfam" id="TIGR00388">
    <property type="entry name" value="glyQ"/>
    <property type="match status" value="1"/>
</dbReference>
<dbReference type="NCBIfam" id="NF006827">
    <property type="entry name" value="PRK09348.1"/>
    <property type="match status" value="1"/>
</dbReference>
<dbReference type="PANTHER" id="PTHR30075:SF2">
    <property type="entry name" value="GLYCINE--TRNA LIGASE, CHLOROPLASTIC_MITOCHONDRIAL 2"/>
    <property type="match status" value="1"/>
</dbReference>
<dbReference type="PANTHER" id="PTHR30075">
    <property type="entry name" value="GLYCYL-TRNA SYNTHETASE"/>
    <property type="match status" value="1"/>
</dbReference>
<dbReference type="Pfam" id="PF02091">
    <property type="entry name" value="tRNA-synt_2e"/>
    <property type="match status" value="1"/>
</dbReference>
<dbReference type="PRINTS" id="PR01044">
    <property type="entry name" value="TRNASYNTHGA"/>
</dbReference>
<dbReference type="SUPFAM" id="SSF55681">
    <property type="entry name" value="Class II aaRS and biotin synthetases"/>
    <property type="match status" value="1"/>
</dbReference>
<dbReference type="PROSITE" id="PS50861">
    <property type="entry name" value="AA_TRNA_LIGASE_II_GLYAB"/>
    <property type="match status" value="1"/>
</dbReference>
<keyword id="KW-0030">Aminoacyl-tRNA synthetase</keyword>
<keyword id="KW-0067">ATP-binding</keyword>
<keyword id="KW-0963">Cytoplasm</keyword>
<keyword id="KW-0436">Ligase</keyword>
<keyword id="KW-0547">Nucleotide-binding</keyword>
<keyword id="KW-0648">Protein biosynthesis</keyword>
<reference key="1">
    <citation type="journal article" date="2008" name="Infect. Immun.">
        <title>Genomic comparison of virulent Rickettsia rickettsii Sheila Smith and avirulent Rickettsia rickettsii Iowa.</title>
        <authorList>
            <person name="Ellison D.W."/>
            <person name="Clark T.R."/>
            <person name="Sturdevant D.E."/>
            <person name="Virtaneva K."/>
            <person name="Porcella S.F."/>
            <person name="Hackstadt T."/>
        </authorList>
    </citation>
    <scope>NUCLEOTIDE SEQUENCE [LARGE SCALE GENOMIC DNA]</scope>
    <source>
        <strain>Iowa</strain>
    </source>
</reference>
<sequence>MKKLSFQQIILTLQNYWQDYGCAILQPYDAYVGAGTFHPATVLRCLGTKPWSVAYVQPSRRPGDSRYGMHPNRMQHYYQFQVILKPSPDNIQELYLKSLECLGIDLKIHDIRFVEDDWESPTLGAAGLGWEVWCNGMEVSQFTYMQQIGGIECRPVAGEITYGLERLALYIQGVDEVRELDWNGQVGEKALKYGEVDFEAEWQFSKYNLELADSEMLLRHFKDSEDQCERLIKANLPMPAYDECLKASHAFNQLNALGVISVTERASYVLRVRHLARICCTKWLEMNK</sequence>